<protein>
    <recommendedName>
        <fullName evidence="1">DNA polymerase sliding clamp</fullName>
    </recommendedName>
    <alternativeName>
        <fullName evidence="1">Proliferating cell nuclear antigen homolog</fullName>
        <shortName evidence="1">PCNA</shortName>
    </alternativeName>
</protein>
<accession>Q46E39</accession>
<dbReference type="EMBL" id="CP000099">
    <property type="protein sequence ID" value="AAZ69853.1"/>
    <property type="molecule type" value="Genomic_DNA"/>
</dbReference>
<dbReference type="SMR" id="Q46E39"/>
<dbReference type="STRING" id="269797.Mbar_A0879"/>
<dbReference type="PaxDb" id="269797-Mbar_A0879"/>
<dbReference type="KEGG" id="mba:Mbar_A0879"/>
<dbReference type="eggNOG" id="arCOG00488">
    <property type="taxonomic scope" value="Archaea"/>
</dbReference>
<dbReference type="HOGENOM" id="CLU_043978_1_1_2"/>
<dbReference type="OrthoDB" id="14749at2157"/>
<dbReference type="GO" id="GO:0003677">
    <property type="term" value="F:DNA binding"/>
    <property type="evidence" value="ECO:0007669"/>
    <property type="project" value="UniProtKB-UniRule"/>
</dbReference>
<dbReference type="GO" id="GO:0030337">
    <property type="term" value="F:DNA polymerase processivity factor activity"/>
    <property type="evidence" value="ECO:0007669"/>
    <property type="project" value="UniProtKB-UniRule"/>
</dbReference>
<dbReference type="GO" id="GO:0006272">
    <property type="term" value="P:leading strand elongation"/>
    <property type="evidence" value="ECO:0007669"/>
    <property type="project" value="TreeGrafter"/>
</dbReference>
<dbReference type="GO" id="GO:0006275">
    <property type="term" value="P:regulation of DNA replication"/>
    <property type="evidence" value="ECO:0007669"/>
    <property type="project" value="UniProtKB-UniRule"/>
</dbReference>
<dbReference type="CDD" id="cd00577">
    <property type="entry name" value="PCNA"/>
    <property type="match status" value="1"/>
</dbReference>
<dbReference type="FunFam" id="3.70.10.10:FF:000015">
    <property type="entry name" value="DNA polymerase sliding clamp"/>
    <property type="match status" value="1"/>
</dbReference>
<dbReference type="Gene3D" id="3.70.10.10">
    <property type="match status" value="1"/>
</dbReference>
<dbReference type="HAMAP" id="MF_00317">
    <property type="entry name" value="DNApol_clamp_arch"/>
    <property type="match status" value="1"/>
</dbReference>
<dbReference type="InterPro" id="IPR046938">
    <property type="entry name" value="DNA_clamp_sf"/>
</dbReference>
<dbReference type="InterPro" id="IPR000730">
    <property type="entry name" value="Pr_cel_nuc_antig"/>
</dbReference>
<dbReference type="InterPro" id="IPR022649">
    <property type="entry name" value="Pr_cel_nuc_antig_C"/>
</dbReference>
<dbReference type="InterPro" id="IPR022659">
    <property type="entry name" value="Pr_cel_nuc_antig_CS"/>
</dbReference>
<dbReference type="InterPro" id="IPR022648">
    <property type="entry name" value="Pr_cel_nuc_antig_N"/>
</dbReference>
<dbReference type="NCBIfam" id="NF002222">
    <property type="entry name" value="PRK01115.1-5"/>
    <property type="match status" value="1"/>
</dbReference>
<dbReference type="PANTHER" id="PTHR11352">
    <property type="entry name" value="PROLIFERATING CELL NUCLEAR ANTIGEN"/>
    <property type="match status" value="1"/>
</dbReference>
<dbReference type="PANTHER" id="PTHR11352:SF0">
    <property type="entry name" value="PROLIFERATING CELL NUCLEAR ANTIGEN"/>
    <property type="match status" value="1"/>
</dbReference>
<dbReference type="Pfam" id="PF02747">
    <property type="entry name" value="PCNA_C"/>
    <property type="match status" value="1"/>
</dbReference>
<dbReference type="Pfam" id="PF00705">
    <property type="entry name" value="PCNA_N"/>
    <property type="match status" value="1"/>
</dbReference>
<dbReference type="PRINTS" id="PR00339">
    <property type="entry name" value="PCNACYCLIN"/>
</dbReference>
<dbReference type="SUPFAM" id="SSF55979">
    <property type="entry name" value="DNA clamp"/>
    <property type="match status" value="2"/>
</dbReference>
<dbReference type="PROSITE" id="PS01251">
    <property type="entry name" value="PCNA_1"/>
    <property type="match status" value="1"/>
</dbReference>
<feature type="chain" id="PRO_1000019170" description="DNA polymerase sliding clamp">
    <location>
        <begin position="1"/>
        <end position="245"/>
    </location>
</feature>
<reference key="1">
    <citation type="journal article" date="2006" name="J. Bacteriol.">
        <title>The Methanosarcina barkeri genome: comparative analysis with Methanosarcina acetivorans and Methanosarcina mazei reveals extensive rearrangement within methanosarcinal genomes.</title>
        <authorList>
            <person name="Maeder D.L."/>
            <person name="Anderson I."/>
            <person name="Brettin T.S."/>
            <person name="Bruce D.C."/>
            <person name="Gilna P."/>
            <person name="Han C.S."/>
            <person name="Lapidus A."/>
            <person name="Metcalf W.W."/>
            <person name="Saunders E."/>
            <person name="Tapia R."/>
            <person name="Sowers K.R."/>
        </authorList>
    </citation>
    <scope>NUCLEOTIDE SEQUENCE [LARGE SCALE GENOMIC DNA]</scope>
    <source>
        <strain>Fusaro / DSM 804</strain>
    </source>
</reference>
<name>PCNA_METBF</name>
<organism>
    <name type="scientific">Methanosarcina barkeri (strain Fusaro / DSM 804)</name>
    <dbReference type="NCBI Taxonomy" id="269797"/>
    <lineage>
        <taxon>Archaea</taxon>
        <taxon>Methanobacteriati</taxon>
        <taxon>Methanobacteriota</taxon>
        <taxon>Stenosarchaea group</taxon>
        <taxon>Methanomicrobia</taxon>
        <taxon>Methanosarcinales</taxon>
        <taxon>Methanosarcinaceae</taxon>
        <taxon>Methanosarcina</taxon>
    </lineage>
</organism>
<proteinExistence type="inferred from homology"/>
<evidence type="ECO:0000255" key="1">
    <source>
        <dbReference type="HAMAP-Rule" id="MF_00317"/>
    </source>
</evidence>
<sequence length="245" mass="26759">MFKAAINAELLKDAVAALAVIVDEVRFKINPEGISVKAVDPANVAMGIFELGSSAFDEYNADECEIGVDLNKITDLLGIADKNDTVRMELEEENHKLLIDVGGLSYTLSLLDPSTIRAEPRVPQLELPAKVVLNGADLRRAVKAAEKISDHMLMGVSDDTFYMEAKGDTDQVRLEMGRDQLIDLKAGEACSLFSLDYLTDIVKPTNKVNEVTLSLGKDFPILIDFEIANGSGRISYLLAPRIESD</sequence>
<comment type="function">
    <text evidence="1">Sliding clamp subunit that acts as a moving platform for DNA processing. Responsible for tethering the catalytic subunit of DNA polymerase and other proteins to DNA during high-speed replication.</text>
</comment>
<comment type="subunit">
    <text evidence="1">Homotrimer. The subunits circularize to form a toroid; DNA passes through its center. Replication factor C (RFC) is required to load the toroid on the DNA.</text>
</comment>
<comment type="similarity">
    <text evidence="1">Belongs to the PCNA family.</text>
</comment>
<keyword id="KW-0235">DNA replication</keyword>
<keyword id="KW-0238">DNA-binding</keyword>
<gene>
    <name evidence="1" type="primary">pcn</name>
    <name type="ordered locus">Mbar_A0879</name>
</gene>